<organism>
    <name type="scientific">Chromobacterium violaceum (strain ATCC 12472 / DSM 30191 / JCM 1249 / CCUG 213 / NBRC 12614 / NCIMB 9131 / NCTC 9757 / MK)</name>
    <dbReference type="NCBI Taxonomy" id="243365"/>
    <lineage>
        <taxon>Bacteria</taxon>
        <taxon>Pseudomonadati</taxon>
        <taxon>Pseudomonadota</taxon>
        <taxon>Betaproteobacteria</taxon>
        <taxon>Neisseriales</taxon>
        <taxon>Chromobacteriaceae</taxon>
        <taxon>Chromobacterium</taxon>
    </lineage>
</organism>
<proteinExistence type="inferred from homology"/>
<reference key="1">
    <citation type="journal article" date="2003" name="Proc. Natl. Acad. Sci. U.S.A.">
        <title>The complete genome sequence of Chromobacterium violaceum reveals remarkable and exploitable bacterial adaptability.</title>
        <authorList>
            <person name="Vasconcelos A.T.R."/>
            <person name="de Almeida D.F."/>
            <person name="Hungria M."/>
            <person name="Guimaraes C.T."/>
            <person name="Antonio R.V."/>
            <person name="Almeida F.C."/>
            <person name="de Almeida L.G.P."/>
            <person name="de Almeida R."/>
            <person name="Alves-Gomes J.A."/>
            <person name="Andrade E.M."/>
            <person name="Araripe J."/>
            <person name="de Araujo M.F.F."/>
            <person name="Astolfi-Filho S."/>
            <person name="Azevedo V."/>
            <person name="Baptista A.J."/>
            <person name="Bataus L.A.M."/>
            <person name="Batista J.S."/>
            <person name="Belo A."/>
            <person name="van den Berg C."/>
            <person name="Bogo M."/>
            <person name="Bonatto S."/>
            <person name="Bordignon J."/>
            <person name="Brigido M.M."/>
            <person name="Brito C.A."/>
            <person name="Brocchi M."/>
            <person name="Burity H.A."/>
            <person name="Camargo A.A."/>
            <person name="Cardoso D.D.P."/>
            <person name="Carneiro N.P."/>
            <person name="Carraro D.M."/>
            <person name="Carvalho C.M.B."/>
            <person name="Cascardo J.C.M."/>
            <person name="Cavada B.S."/>
            <person name="Chueire L.M.O."/>
            <person name="Creczynski-Pasa T.B."/>
            <person name="Cunha-Junior N.C."/>
            <person name="Fagundes N."/>
            <person name="Falcao C.L."/>
            <person name="Fantinatti F."/>
            <person name="Farias I.P."/>
            <person name="Felipe M.S.S."/>
            <person name="Ferrari L.P."/>
            <person name="Ferro J.A."/>
            <person name="Ferro M.I.T."/>
            <person name="Franco G.R."/>
            <person name="Freitas N.S.A."/>
            <person name="Furlan L.R."/>
            <person name="Gazzinelli R.T."/>
            <person name="Gomes E.A."/>
            <person name="Goncalves P.R."/>
            <person name="Grangeiro T.B."/>
            <person name="Grattapaglia D."/>
            <person name="Grisard E.C."/>
            <person name="Hanna E.S."/>
            <person name="Jardim S.N."/>
            <person name="Laurino J."/>
            <person name="Leoi L.C.T."/>
            <person name="Lima L.F.A."/>
            <person name="Loureiro M.F."/>
            <person name="Lyra M.C.C.P."/>
            <person name="Madeira H.M.F."/>
            <person name="Manfio G.P."/>
            <person name="Maranhao A.Q."/>
            <person name="Martins W.S."/>
            <person name="di Mauro S.M.Z."/>
            <person name="de Medeiros S.R.B."/>
            <person name="Meissner R.V."/>
            <person name="Moreira M.A.M."/>
            <person name="Nascimento F.F."/>
            <person name="Nicolas M.F."/>
            <person name="Oliveira J.G."/>
            <person name="Oliveira S.C."/>
            <person name="Paixao R.F.C."/>
            <person name="Parente J.A."/>
            <person name="Pedrosa F.O."/>
            <person name="Pena S.D.J."/>
            <person name="Pereira J.O."/>
            <person name="Pereira M."/>
            <person name="Pinto L.S.R.C."/>
            <person name="Pinto L.S."/>
            <person name="Porto J.I.R."/>
            <person name="Potrich D.P."/>
            <person name="Ramalho-Neto C.E."/>
            <person name="Reis A.M.M."/>
            <person name="Rigo L.U."/>
            <person name="Rondinelli E."/>
            <person name="Santos E.B.P."/>
            <person name="Santos F.R."/>
            <person name="Schneider M.P.C."/>
            <person name="Seuanez H.N."/>
            <person name="Silva A.M.R."/>
            <person name="da Silva A.L.C."/>
            <person name="Silva D.W."/>
            <person name="Silva R."/>
            <person name="Simoes I.C."/>
            <person name="Simon D."/>
            <person name="Soares C.M.A."/>
            <person name="Soares R.B.A."/>
            <person name="Souza E.M."/>
            <person name="Souza K.R.L."/>
            <person name="Souza R.C."/>
            <person name="Steffens M.B.R."/>
            <person name="Steindel M."/>
            <person name="Teixeira S.R."/>
            <person name="Urmenyi T."/>
            <person name="Vettore A."/>
            <person name="Wassem R."/>
            <person name="Zaha A."/>
            <person name="Simpson A.J.G."/>
        </authorList>
    </citation>
    <scope>NUCLEOTIDE SEQUENCE [LARGE SCALE GENOMIC DNA]</scope>
    <source>
        <strain>ATCC 12472 / DSM 30191 / JCM 1249 / CCUG 213 / NBRC 12614 / NCIMB 9131 / NCTC 9757 / MK</strain>
    </source>
</reference>
<gene>
    <name evidence="1" type="primary">leuD2</name>
    <name type="ordered locus">CV_2782</name>
</gene>
<sequence>MKAFTTLQGLVCPLDRANVDTDAIIPKQFLKSIKRSGFGPNLFDEWRYLDHGEPGMDNAKRPLNPDFVLNQPRYQGAQVLLARENFGCGSSREHAPWALDDQGFRVVIAPSFADIFFNNCYKNGLLPIVLAADIVDQLFQECEAAPGYSLKVDLAAQTVFTPSGQAFLFDITEHRKHCLLGGLDEIGLTLQHADEIKAFEARRRVEQPWLFA</sequence>
<keyword id="KW-0028">Amino-acid biosynthesis</keyword>
<keyword id="KW-0100">Branched-chain amino acid biosynthesis</keyword>
<keyword id="KW-0432">Leucine biosynthesis</keyword>
<keyword id="KW-0456">Lyase</keyword>
<keyword id="KW-1185">Reference proteome</keyword>
<name>LEUD2_CHRVO</name>
<feature type="chain" id="PRO_0000141811" description="3-isopropylmalate dehydratase small subunit 2">
    <location>
        <begin position="1"/>
        <end position="212"/>
    </location>
</feature>
<comment type="function">
    <text evidence="1">Catalyzes the isomerization between 2-isopropylmalate and 3-isopropylmalate, via the formation of 2-isopropylmaleate.</text>
</comment>
<comment type="catalytic activity">
    <reaction evidence="1">
        <text>(2R,3S)-3-isopropylmalate = (2S)-2-isopropylmalate</text>
        <dbReference type="Rhea" id="RHEA:32287"/>
        <dbReference type="ChEBI" id="CHEBI:1178"/>
        <dbReference type="ChEBI" id="CHEBI:35121"/>
        <dbReference type="EC" id="4.2.1.33"/>
    </reaction>
</comment>
<comment type="pathway">
    <text evidence="1">Amino-acid biosynthesis; L-leucine biosynthesis; L-leucine from 3-methyl-2-oxobutanoate: step 2/4.</text>
</comment>
<comment type="subunit">
    <text evidence="1">Heterodimer of LeuC and LeuD.</text>
</comment>
<comment type="similarity">
    <text evidence="1">Belongs to the LeuD family. LeuD type 1 subfamily.</text>
</comment>
<evidence type="ECO:0000255" key="1">
    <source>
        <dbReference type="HAMAP-Rule" id="MF_01031"/>
    </source>
</evidence>
<accession>Q7NUB8</accession>
<protein>
    <recommendedName>
        <fullName evidence="1">3-isopropylmalate dehydratase small subunit 2</fullName>
        <ecNumber evidence="1">4.2.1.33</ecNumber>
    </recommendedName>
    <alternativeName>
        <fullName evidence="1">Alpha-IPM isomerase 2</fullName>
        <shortName evidence="1">IPMI 2</shortName>
    </alternativeName>
    <alternativeName>
        <fullName evidence="1">Isopropylmalate isomerase 2</fullName>
    </alternativeName>
</protein>
<dbReference type="EC" id="4.2.1.33" evidence="1"/>
<dbReference type="EMBL" id="AE016825">
    <property type="protein sequence ID" value="AAQ60450.1"/>
    <property type="molecule type" value="Genomic_DNA"/>
</dbReference>
<dbReference type="RefSeq" id="WP_011136329.1">
    <property type="nucleotide sequence ID" value="NC_005085.1"/>
</dbReference>
<dbReference type="SMR" id="Q7NUB8"/>
<dbReference type="STRING" id="243365.CV_2782"/>
<dbReference type="KEGG" id="cvi:CV_2782"/>
<dbReference type="eggNOG" id="COG0066">
    <property type="taxonomic scope" value="Bacteria"/>
</dbReference>
<dbReference type="HOGENOM" id="CLU_081378_0_3_4"/>
<dbReference type="OrthoDB" id="9777465at2"/>
<dbReference type="UniPathway" id="UPA00048">
    <property type="reaction ID" value="UER00071"/>
</dbReference>
<dbReference type="Proteomes" id="UP000001424">
    <property type="component" value="Chromosome"/>
</dbReference>
<dbReference type="GO" id="GO:0009316">
    <property type="term" value="C:3-isopropylmalate dehydratase complex"/>
    <property type="evidence" value="ECO:0007669"/>
    <property type="project" value="InterPro"/>
</dbReference>
<dbReference type="GO" id="GO:0003861">
    <property type="term" value="F:3-isopropylmalate dehydratase activity"/>
    <property type="evidence" value="ECO:0007669"/>
    <property type="project" value="UniProtKB-UniRule"/>
</dbReference>
<dbReference type="GO" id="GO:0009098">
    <property type="term" value="P:L-leucine biosynthetic process"/>
    <property type="evidence" value="ECO:0007669"/>
    <property type="project" value="UniProtKB-UniRule"/>
</dbReference>
<dbReference type="CDD" id="cd01577">
    <property type="entry name" value="IPMI_Swivel"/>
    <property type="match status" value="1"/>
</dbReference>
<dbReference type="FunFam" id="3.20.19.10:FF:000003">
    <property type="entry name" value="3-isopropylmalate dehydratase small subunit"/>
    <property type="match status" value="1"/>
</dbReference>
<dbReference type="Gene3D" id="3.20.19.10">
    <property type="entry name" value="Aconitase, domain 4"/>
    <property type="match status" value="1"/>
</dbReference>
<dbReference type="HAMAP" id="MF_01031">
    <property type="entry name" value="LeuD_type1"/>
    <property type="match status" value="1"/>
</dbReference>
<dbReference type="InterPro" id="IPR004431">
    <property type="entry name" value="3-IsopropMal_deHydase_ssu"/>
</dbReference>
<dbReference type="InterPro" id="IPR015928">
    <property type="entry name" value="Aconitase/3IPM_dehydase_swvl"/>
</dbReference>
<dbReference type="InterPro" id="IPR000573">
    <property type="entry name" value="AconitaseA/IPMdHydase_ssu_swvl"/>
</dbReference>
<dbReference type="InterPro" id="IPR033940">
    <property type="entry name" value="IPMI_Swivel"/>
</dbReference>
<dbReference type="InterPro" id="IPR050075">
    <property type="entry name" value="LeuD"/>
</dbReference>
<dbReference type="NCBIfam" id="TIGR00171">
    <property type="entry name" value="leuD"/>
    <property type="match status" value="1"/>
</dbReference>
<dbReference type="NCBIfam" id="NF002458">
    <property type="entry name" value="PRK01641.1"/>
    <property type="match status" value="1"/>
</dbReference>
<dbReference type="PANTHER" id="PTHR43345:SF5">
    <property type="entry name" value="3-ISOPROPYLMALATE DEHYDRATASE SMALL SUBUNIT"/>
    <property type="match status" value="1"/>
</dbReference>
<dbReference type="PANTHER" id="PTHR43345">
    <property type="entry name" value="3-ISOPROPYLMALATE DEHYDRATASE SMALL SUBUNIT 2-RELATED-RELATED"/>
    <property type="match status" value="1"/>
</dbReference>
<dbReference type="Pfam" id="PF00694">
    <property type="entry name" value="Aconitase_C"/>
    <property type="match status" value="1"/>
</dbReference>
<dbReference type="SUPFAM" id="SSF52016">
    <property type="entry name" value="LeuD/IlvD-like"/>
    <property type="match status" value="1"/>
</dbReference>